<accession>Q0RDP3</accession>
<comment type="function">
    <text evidence="1">An accessory protein needed during the final step in the assembly of 30S ribosomal subunit, possibly for assembly of the head region. Essential for efficient processing of 16S rRNA. May be needed both before and after RbfA during the maturation of 16S rRNA. It has affinity for free ribosomal 30S subunits but not for 70S ribosomes.</text>
</comment>
<comment type="subunit">
    <text evidence="1">Binds ribosomal protein uS19.</text>
</comment>
<comment type="subcellular location">
    <subcellularLocation>
        <location evidence="1">Cytoplasm</location>
    </subcellularLocation>
</comment>
<comment type="domain">
    <text evidence="1">The PRC barrel domain binds ribosomal protein uS19.</text>
</comment>
<comment type="similarity">
    <text evidence="1">Belongs to the RimM family.</text>
</comment>
<feature type="chain" id="PRO_1000001171" description="Ribosome maturation factor RimM">
    <location>
        <begin position="1"/>
        <end position="180"/>
    </location>
</feature>
<feature type="domain" description="PRC barrel" evidence="1">
    <location>
        <begin position="103"/>
        <end position="176"/>
    </location>
</feature>
<gene>
    <name evidence="1" type="primary">rimM</name>
    <name type="ordered locus">FRAAL5791</name>
</gene>
<organism>
    <name type="scientific">Frankia alni (strain DSM 45986 / CECT 9034 / ACN14a)</name>
    <dbReference type="NCBI Taxonomy" id="326424"/>
    <lineage>
        <taxon>Bacteria</taxon>
        <taxon>Bacillati</taxon>
        <taxon>Actinomycetota</taxon>
        <taxon>Actinomycetes</taxon>
        <taxon>Frankiales</taxon>
        <taxon>Frankiaceae</taxon>
        <taxon>Frankia</taxon>
    </lineage>
</organism>
<name>RIMM_FRAAA</name>
<proteinExistence type="inferred from homology"/>
<sequence length="180" mass="18875">MTEPIVVGRIGRPHGVRGDVTIEVRTDLPQRRFALGAVLGREGGGAPLTVAEARWHSGRLLLRFQGVEDRGAAEALRDVLLTIDSAEAGPPVDDDEDAEGEGGDIWWDRDLVGLEAVTTAGATLGRVTDVIHAPAGDLLAVGRPGGGEHLVPFVREIVPTVDPAAGRIVVDPPPGLLDLD</sequence>
<protein>
    <recommendedName>
        <fullName evidence="1">Ribosome maturation factor RimM</fullName>
    </recommendedName>
</protein>
<reference key="1">
    <citation type="journal article" date="2007" name="Genome Res.">
        <title>Genome characteristics of facultatively symbiotic Frankia sp. strains reflect host range and host plant biogeography.</title>
        <authorList>
            <person name="Normand P."/>
            <person name="Lapierre P."/>
            <person name="Tisa L.S."/>
            <person name="Gogarten J.P."/>
            <person name="Alloisio N."/>
            <person name="Bagnarol E."/>
            <person name="Bassi C.A."/>
            <person name="Berry A.M."/>
            <person name="Bickhart D.M."/>
            <person name="Choisne N."/>
            <person name="Couloux A."/>
            <person name="Cournoyer B."/>
            <person name="Cruveiller S."/>
            <person name="Daubin V."/>
            <person name="Demange N."/>
            <person name="Francino M.P."/>
            <person name="Goltsman E."/>
            <person name="Huang Y."/>
            <person name="Kopp O.R."/>
            <person name="Labarre L."/>
            <person name="Lapidus A."/>
            <person name="Lavire C."/>
            <person name="Marechal J."/>
            <person name="Martinez M."/>
            <person name="Mastronunzio J.E."/>
            <person name="Mullin B.C."/>
            <person name="Niemann J."/>
            <person name="Pujic P."/>
            <person name="Rawnsley T."/>
            <person name="Rouy Z."/>
            <person name="Schenowitz C."/>
            <person name="Sellstedt A."/>
            <person name="Tavares F."/>
            <person name="Tomkins J.P."/>
            <person name="Vallenet D."/>
            <person name="Valverde C."/>
            <person name="Wall L.G."/>
            <person name="Wang Y."/>
            <person name="Medigue C."/>
            <person name="Benson D.R."/>
        </authorList>
    </citation>
    <scope>NUCLEOTIDE SEQUENCE [LARGE SCALE GENOMIC DNA]</scope>
    <source>
        <strain>DSM 45986 / CECT 9034 / ACN14a</strain>
    </source>
</reference>
<keyword id="KW-0143">Chaperone</keyword>
<keyword id="KW-0963">Cytoplasm</keyword>
<keyword id="KW-1185">Reference proteome</keyword>
<keyword id="KW-0690">Ribosome biogenesis</keyword>
<keyword id="KW-0698">rRNA processing</keyword>
<dbReference type="EMBL" id="CT573213">
    <property type="protein sequence ID" value="CAJ64423.1"/>
    <property type="molecule type" value="Genomic_DNA"/>
</dbReference>
<dbReference type="RefSeq" id="WP_011606863.1">
    <property type="nucleotide sequence ID" value="NC_008278.1"/>
</dbReference>
<dbReference type="SMR" id="Q0RDP3"/>
<dbReference type="STRING" id="326424.FRAAL5791"/>
<dbReference type="KEGG" id="fal:FRAAL5791"/>
<dbReference type="eggNOG" id="COG0806">
    <property type="taxonomic scope" value="Bacteria"/>
</dbReference>
<dbReference type="HOGENOM" id="CLU_077636_0_0_11"/>
<dbReference type="OrthoDB" id="5381335at2"/>
<dbReference type="Proteomes" id="UP000000657">
    <property type="component" value="Chromosome"/>
</dbReference>
<dbReference type="GO" id="GO:0005737">
    <property type="term" value="C:cytoplasm"/>
    <property type="evidence" value="ECO:0007669"/>
    <property type="project" value="UniProtKB-SubCell"/>
</dbReference>
<dbReference type="GO" id="GO:0005840">
    <property type="term" value="C:ribosome"/>
    <property type="evidence" value="ECO:0007669"/>
    <property type="project" value="InterPro"/>
</dbReference>
<dbReference type="GO" id="GO:0043022">
    <property type="term" value="F:ribosome binding"/>
    <property type="evidence" value="ECO:0007669"/>
    <property type="project" value="InterPro"/>
</dbReference>
<dbReference type="GO" id="GO:0042274">
    <property type="term" value="P:ribosomal small subunit biogenesis"/>
    <property type="evidence" value="ECO:0007669"/>
    <property type="project" value="UniProtKB-UniRule"/>
</dbReference>
<dbReference type="GO" id="GO:0006364">
    <property type="term" value="P:rRNA processing"/>
    <property type="evidence" value="ECO:0007669"/>
    <property type="project" value="UniProtKB-UniRule"/>
</dbReference>
<dbReference type="Gene3D" id="2.30.30.240">
    <property type="entry name" value="PRC-barrel domain"/>
    <property type="match status" value="1"/>
</dbReference>
<dbReference type="Gene3D" id="2.40.30.60">
    <property type="entry name" value="RimM"/>
    <property type="match status" value="1"/>
</dbReference>
<dbReference type="HAMAP" id="MF_00014">
    <property type="entry name" value="Ribosome_mat_RimM"/>
    <property type="match status" value="1"/>
</dbReference>
<dbReference type="InterPro" id="IPR011033">
    <property type="entry name" value="PRC_barrel-like_sf"/>
</dbReference>
<dbReference type="InterPro" id="IPR056792">
    <property type="entry name" value="PRC_RimM"/>
</dbReference>
<dbReference type="InterPro" id="IPR011961">
    <property type="entry name" value="RimM"/>
</dbReference>
<dbReference type="InterPro" id="IPR002676">
    <property type="entry name" value="RimM_N"/>
</dbReference>
<dbReference type="InterPro" id="IPR036976">
    <property type="entry name" value="RimM_N_sf"/>
</dbReference>
<dbReference type="InterPro" id="IPR009000">
    <property type="entry name" value="Transl_B-barrel_sf"/>
</dbReference>
<dbReference type="NCBIfam" id="TIGR02273">
    <property type="entry name" value="16S_RimM"/>
    <property type="match status" value="1"/>
</dbReference>
<dbReference type="PANTHER" id="PTHR33692">
    <property type="entry name" value="RIBOSOME MATURATION FACTOR RIMM"/>
    <property type="match status" value="1"/>
</dbReference>
<dbReference type="PANTHER" id="PTHR33692:SF1">
    <property type="entry name" value="RIBOSOME MATURATION FACTOR RIMM"/>
    <property type="match status" value="1"/>
</dbReference>
<dbReference type="Pfam" id="PF24986">
    <property type="entry name" value="PRC_RimM"/>
    <property type="match status" value="1"/>
</dbReference>
<dbReference type="Pfam" id="PF01782">
    <property type="entry name" value="RimM"/>
    <property type="match status" value="1"/>
</dbReference>
<dbReference type="SUPFAM" id="SSF50346">
    <property type="entry name" value="PRC-barrel domain"/>
    <property type="match status" value="1"/>
</dbReference>
<dbReference type="SUPFAM" id="SSF50447">
    <property type="entry name" value="Translation proteins"/>
    <property type="match status" value="1"/>
</dbReference>
<evidence type="ECO:0000255" key="1">
    <source>
        <dbReference type="HAMAP-Rule" id="MF_00014"/>
    </source>
</evidence>